<sequence length="1053" mass="109370">MNKIYLILILFTFVGIILANVEKAEVSCTCDENCNDGNKCTLDKCNNGCCSNTPININDNDECTVDTCNPKTGISHTPVNCDDGNSCTADSCLCGKGCQHVPIACDDNNACTVDSCSNSTGCCHTPLSCDDNNPCTVDSCSNSTGCCHTPINVDDHNACTEDKCTQSGGVTHTPIACDDKNACTVDSCSNSTGCCHTPLSCDDNNACTVDSCSNSTGCVHTPINVDDHNACTEDKCTQSGGVTHTPIACDDKNACTADSCSNSTGCCHTPITCDDNNACTVDSCSNSTGCCHTPINVDDNNACTEDKCTQSGGVTHTPIACDDKNACTVDSCSNSTGCVHTPLACDDKNPCTVDSCSNSTGCCHTPINVDDNNACTEDKCTQSGGVTHTPINCDDNNKCTVDSCSNSTGCCHTPMSCDDNNPCTVDSCSNSTGCVHTPINVDDNNACTEDKCTQNGGVTHTPIACDDKNACTVDSCSNSTGCCHTPLKCDDNNACTVDSCSNSTGCVHTPINVDDNNACTEDKCTQSGGVTHTPISCDDKNPCTIDSCSNSTGCVHTPMSCDDRNPCTSDFCSWEKGCQHVALSCNDFNACTMDSCSNSTGCTHTPIACDDKNACTVDSCSNSTGCVHTPLTCDDNNPCTVDSCSNSTGCCHTPINVDDHNACTEDKCTQSGGVTHTPIACDDKNACTVDSCSNSTGCCHTPLSCDDNNACTVDSCSNSTGCVHTPINVDDNNACTEDKCTQNGGVTHTPIACDDKNACTVDSCSNSTGCCHTPLKCDDNNPCTVDSCSNSTGCVHTPMNVDDNNACTEDKCTQNGGVTHTPIRCDDLNSCTADSCSNSTGCVHTPINCDDNNKCTADSCSNSTGCCHTPISCDDNNPCTVDSCSNSTGCCHTPINVDDNNPCTEDKCTQSGGVTHTPIGCNDNNACTVDSCSNSTGCTHTPMKCDDNNPCTIDSCSNSTGCVHTPMNCDDGNFCTLDSCCSTGCTHTPIIIDDNNPCTVDSCCNSTGVVHTPVDCNDNNVLTCDYCSIKQGGKCIHVPMTQCKTFGKCGDDL</sequence>
<accession>P11976</accession>
<accession>Q55BP6</accession>
<protein>
    <recommendedName>
        <fullName>Prestalk protein</fullName>
    </recommendedName>
    <alternativeName>
        <fullName>Extracellular matrix protein ST310</fullName>
    </alternativeName>
</protein>
<proteinExistence type="evidence at transcript level"/>
<gene>
    <name type="primary">ecmB</name>
    <name type="ORF">DDB_G0269132</name>
</gene>
<reference key="1">
    <citation type="journal article" date="1987" name="Nucleic Acids Res.">
        <title>Structural and functional characterization of a Dictyostelium gene encoding a DIF inducible, prestalk-enriched mRNA sequence.</title>
        <authorList>
            <person name="Ceccarelli A."/>
            <person name="McRobbie S.J."/>
            <person name="Jermyn K.A."/>
            <person name="Duffy K."/>
            <person name="Early A."/>
            <person name="Williams J.G."/>
        </authorList>
    </citation>
    <scope>NUCLEOTIDE SEQUENCE [GENOMIC DNA]</scope>
    <source>
        <strain>AX2</strain>
    </source>
</reference>
<reference key="2">
    <citation type="journal article" date="2005" name="Nature">
        <title>The genome of the social amoeba Dictyostelium discoideum.</title>
        <authorList>
            <person name="Eichinger L."/>
            <person name="Pachebat J.A."/>
            <person name="Gloeckner G."/>
            <person name="Rajandream M.A."/>
            <person name="Sucgang R."/>
            <person name="Berriman M."/>
            <person name="Song J."/>
            <person name="Olsen R."/>
            <person name="Szafranski K."/>
            <person name="Xu Q."/>
            <person name="Tunggal B."/>
            <person name="Kummerfeld S."/>
            <person name="Madera M."/>
            <person name="Konfortov B.A."/>
            <person name="Rivero F."/>
            <person name="Bankier A.T."/>
            <person name="Lehmann R."/>
            <person name="Hamlin N."/>
            <person name="Davies R."/>
            <person name="Gaudet P."/>
            <person name="Fey P."/>
            <person name="Pilcher K."/>
            <person name="Chen G."/>
            <person name="Saunders D."/>
            <person name="Sodergren E.J."/>
            <person name="Davis P."/>
            <person name="Kerhornou A."/>
            <person name="Nie X."/>
            <person name="Hall N."/>
            <person name="Anjard C."/>
            <person name="Hemphill L."/>
            <person name="Bason N."/>
            <person name="Farbrother P."/>
            <person name="Desany B."/>
            <person name="Just E."/>
            <person name="Morio T."/>
            <person name="Rost R."/>
            <person name="Churcher C.M."/>
            <person name="Cooper J."/>
            <person name="Haydock S."/>
            <person name="van Driessche N."/>
            <person name="Cronin A."/>
            <person name="Goodhead I."/>
            <person name="Muzny D.M."/>
            <person name="Mourier T."/>
            <person name="Pain A."/>
            <person name="Lu M."/>
            <person name="Harper D."/>
            <person name="Lindsay R."/>
            <person name="Hauser H."/>
            <person name="James K.D."/>
            <person name="Quiles M."/>
            <person name="Madan Babu M."/>
            <person name="Saito T."/>
            <person name="Buchrieser C."/>
            <person name="Wardroper A."/>
            <person name="Felder M."/>
            <person name="Thangavelu M."/>
            <person name="Johnson D."/>
            <person name="Knights A."/>
            <person name="Loulseged H."/>
            <person name="Mungall K.L."/>
            <person name="Oliver K."/>
            <person name="Price C."/>
            <person name="Quail M.A."/>
            <person name="Urushihara H."/>
            <person name="Hernandez J."/>
            <person name="Rabbinowitsch E."/>
            <person name="Steffen D."/>
            <person name="Sanders M."/>
            <person name="Ma J."/>
            <person name="Kohara Y."/>
            <person name="Sharp S."/>
            <person name="Simmonds M.N."/>
            <person name="Spiegler S."/>
            <person name="Tivey A."/>
            <person name="Sugano S."/>
            <person name="White B."/>
            <person name="Walker D."/>
            <person name="Woodward J.R."/>
            <person name="Winckler T."/>
            <person name="Tanaka Y."/>
            <person name="Shaulsky G."/>
            <person name="Schleicher M."/>
            <person name="Weinstock G.M."/>
            <person name="Rosenthal A."/>
            <person name="Cox E.C."/>
            <person name="Chisholm R.L."/>
            <person name="Gibbs R.A."/>
            <person name="Loomis W.F."/>
            <person name="Platzer M."/>
            <person name="Kay R.R."/>
            <person name="Williams J.G."/>
            <person name="Dear P.H."/>
            <person name="Noegel A.A."/>
            <person name="Barrell B.G."/>
            <person name="Kuspa A."/>
        </authorList>
    </citation>
    <scope>NUCLEOTIDE SEQUENCE [LARGE SCALE GENOMIC DNA]</scope>
    <source>
        <strain>AX4</strain>
    </source>
</reference>
<reference key="3">
    <citation type="journal article" date="1987" name="Mol. Cell. Biol.">
        <title>Developmental regulation of DNase I-hypersensitive sites in Dictyostelium discoideum.</title>
        <authorList>
            <person name="Ayres K."/>
            <person name="Neuman W."/>
            <person name="Rowekamp W.G."/>
            <person name="Chung S."/>
        </authorList>
    </citation>
    <scope>NUCLEOTIDE SEQUENCE [GENOMIC DNA] OF 1-17</scope>
</reference>
<dbReference type="EMBL" id="AAFI02000005">
    <property type="protein sequence ID" value="EAL71916.1"/>
    <property type="molecule type" value="Genomic_DNA"/>
</dbReference>
<dbReference type="EMBL" id="M16345">
    <property type="protein sequence ID" value="AAA33216.1"/>
    <property type="molecule type" value="Genomic_DNA"/>
</dbReference>
<dbReference type="PIR" id="A26838">
    <property type="entry name" value="A26838"/>
</dbReference>
<dbReference type="RefSeq" id="XP_646785.1">
    <property type="nucleotide sequence ID" value="XM_641693.1"/>
</dbReference>
<dbReference type="FunCoup" id="P11976">
    <property type="interactions" value="46"/>
</dbReference>
<dbReference type="STRING" id="44689.P11976"/>
<dbReference type="PaxDb" id="44689-DDB0216219"/>
<dbReference type="EnsemblProtists" id="EAL71916">
    <property type="protein sequence ID" value="EAL71916"/>
    <property type="gene ID" value="DDB_G0269132"/>
</dbReference>
<dbReference type="GeneID" id="8617758"/>
<dbReference type="KEGG" id="ddi:DDB_G0269132"/>
<dbReference type="dictyBase" id="DDB_G0269132">
    <property type="gene designation" value="ecmB"/>
</dbReference>
<dbReference type="VEuPathDB" id="AmoebaDB:DDB_G0269132"/>
<dbReference type="eggNOG" id="ENOG502RSRD">
    <property type="taxonomic scope" value="Eukaryota"/>
</dbReference>
<dbReference type="HOGENOM" id="CLU_290611_0_0_1"/>
<dbReference type="InParanoid" id="P11976"/>
<dbReference type="OMA" id="CTEDKCT"/>
<dbReference type="PhylomeDB" id="P11976"/>
<dbReference type="PRO" id="PR:P11976"/>
<dbReference type="Proteomes" id="UP000002195">
    <property type="component" value="Chromosome 1"/>
</dbReference>
<dbReference type="GO" id="GO:0031012">
    <property type="term" value="C:extracellular matrix"/>
    <property type="evidence" value="ECO:0000318"/>
    <property type="project" value="GO_Central"/>
</dbReference>
<dbReference type="GO" id="GO:0005576">
    <property type="term" value="C:extracellular region"/>
    <property type="evidence" value="ECO:0000318"/>
    <property type="project" value="GO_Central"/>
</dbReference>
<dbReference type="GO" id="GO:0005198">
    <property type="term" value="F:structural molecule activity"/>
    <property type="evidence" value="ECO:0000304"/>
    <property type="project" value="dictyBase"/>
</dbReference>
<dbReference type="GO" id="GO:0031154">
    <property type="term" value="P:culmination involved in sorocarp development"/>
    <property type="evidence" value="ECO:0000270"/>
    <property type="project" value="dictyBase"/>
</dbReference>
<dbReference type="GO" id="GO:0030198">
    <property type="term" value="P:extracellular matrix organization"/>
    <property type="evidence" value="ECO:0000304"/>
    <property type="project" value="dictyBase"/>
</dbReference>
<dbReference type="GO" id="GO:0099120">
    <property type="term" value="P:socially cooperative development"/>
    <property type="evidence" value="ECO:0000318"/>
    <property type="project" value="GO_Central"/>
</dbReference>
<dbReference type="InterPro" id="IPR052846">
    <property type="entry name" value="ECM-enzyme_regulator"/>
</dbReference>
<dbReference type="InterPro" id="IPR001673">
    <property type="entry name" value="S_mold_repeat"/>
</dbReference>
<dbReference type="PANTHER" id="PTHR31797">
    <property type="entry name" value="EXTRACELLULAR MATRIX PROTEIN A-RELATED"/>
    <property type="match status" value="1"/>
</dbReference>
<dbReference type="PANTHER" id="PTHR31797:SF3">
    <property type="entry name" value="EXTRACELLULAR MATRIX PROTEIN-RELATED"/>
    <property type="match status" value="1"/>
</dbReference>
<dbReference type="Pfam" id="PF00526">
    <property type="entry name" value="Dicty_CTDC"/>
    <property type="match status" value="42"/>
</dbReference>
<organism>
    <name type="scientific">Dictyostelium discoideum</name>
    <name type="common">Social amoeba</name>
    <dbReference type="NCBI Taxonomy" id="44689"/>
    <lineage>
        <taxon>Eukaryota</taxon>
        <taxon>Amoebozoa</taxon>
        <taxon>Evosea</taxon>
        <taxon>Eumycetozoa</taxon>
        <taxon>Dictyostelia</taxon>
        <taxon>Dictyosteliales</taxon>
        <taxon>Dictyosteliaceae</taxon>
        <taxon>Dictyostelium</taxon>
    </lineage>
</organism>
<feature type="signal peptide" evidence="1">
    <location>
        <begin position="1"/>
        <end position="18"/>
    </location>
</feature>
<feature type="chain" id="PRO_0000022171" description="Prestalk protein">
    <location>
        <begin position="19"/>
        <end position="1053"/>
    </location>
</feature>
<feature type="repeat" description="X-1">
    <location>
        <begin position="38"/>
        <end position="60"/>
    </location>
</feature>
<feature type="repeat" description="X-2">
    <location>
        <begin position="61"/>
        <end position="84"/>
    </location>
</feature>
<feature type="repeat" description="X-3">
    <location>
        <begin position="85"/>
        <end position="108"/>
    </location>
</feature>
<feature type="repeat" description="A-1">
    <location>
        <begin position="109"/>
        <end position="132"/>
    </location>
</feature>
<feature type="repeat" description="A-2">
    <location>
        <begin position="133"/>
        <end position="156"/>
    </location>
</feature>
<feature type="repeat" description="B-1">
    <location>
        <begin position="157"/>
        <end position="180"/>
    </location>
</feature>
<feature type="repeat" description="A-3">
    <location>
        <begin position="181"/>
        <end position="204"/>
    </location>
</feature>
<feature type="repeat" description="A-4">
    <location>
        <begin position="205"/>
        <end position="228"/>
    </location>
</feature>
<feature type="repeat" description="B-2">
    <location>
        <begin position="229"/>
        <end position="252"/>
    </location>
</feature>
<feature type="repeat" description="A-5">
    <location>
        <begin position="253"/>
        <end position="276"/>
    </location>
</feature>
<feature type="repeat" description="A-6">
    <location>
        <begin position="277"/>
        <end position="300"/>
    </location>
</feature>
<feature type="repeat" description="B-3">
    <location>
        <begin position="301"/>
        <end position="324"/>
    </location>
</feature>
<feature type="repeat" description="A-7">
    <location>
        <begin position="325"/>
        <end position="348"/>
    </location>
</feature>
<feature type="repeat" description="A-8">
    <location>
        <begin position="349"/>
        <end position="372"/>
    </location>
</feature>
<feature type="repeat" description="B-4">
    <location>
        <begin position="373"/>
        <end position="396"/>
    </location>
</feature>
<feature type="repeat" description="A-9">
    <location>
        <begin position="397"/>
        <end position="420"/>
    </location>
</feature>
<feature type="repeat" description="A-10">
    <location>
        <begin position="421"/>
        <end position="444"/>
    </location>
</feature>
<feature type="repeat" description="B-5">
    <location>
        <begin position="445"/>
        <end position="468"/>
    </location>
</feature>
<feature type="repeat" description="A-11">
    <location>
        <begin position="469"/>
        <end position="492"/>
    </location>
</feature>
<feature type="repeat" description="A-12">
    <location>
        <begin position="493"/>
        <end position="516"/>
    </location>
</feature>
<feature type="repeat" description="B-6">
    <location>
        <begin position="517"/>
        <end position="540"/>
    </location>
</feature>
<feature type="repeat" description="A-13">
    <location>
        <begin position="541"/>
        <end position="564"/>
    </location>
</feature>
<feature type="repeat" description="X-4">
    <location>
        <begin position="565"/>
        <end position="588"/>
    </location>
</feature>
<feature type="repeat" description="A-14">
    <location>
        <begin position="589"/>
        <end position="612"/>
    </location>
</feature>
<feature type="repeat" description="A-15">
    <location>
        <begin position="613"/>
        <end position="636"/>
    </location>
</feature>
<feature type="repeat" description="A-16">
    <location>
        <begin position="637"/>
        <end position="660"/>
    </location>
</feature>
<feature type="repeat" description="B-7">
    <location>
        <begin position="661"/>
        <end position="684"/>
    </location>
</feature>
<feature type="repeat" description="A-17">
    <location>
        <begin position="685"/>
        <end position="708"/>
    </location>
</feature>
<feature type="repeat" description="A-18">
    <location>
        <begin position="709"/>
        <end position="732"/>
    </location>
</feature>
<feature type="repeat" description="B-8">
    <location>
        <begin position="733"/>
        <end position="756"/>
    </location>
</feature>
<feature type="repeat" description="A-19">
    <location>
        <begin position="757"/>
        <end position="780"/>
    </location>
</feature>
<feature type="repeat" description="A-20">
    <location>
        <begin position="781"/>
        <end position="804"/>
    </location>
</feature>
<feature type="repeat" description="B-9">
    <location>
        <begin position="805"/>
        <end position="828"/>
    </location>
</feature>
<feature type="repeat" description="A-21">
    <location>
        <begin position="829"/>
        <end position="852"/>
    </location>
</feature>
<feature type="repeat" description="A-22">
    <location>
        <begin position="853"/>
        <end position="876"/>
    </location>
</feature>
<feature type="repeat" description="A-23">
    <location>
        <begin position="877"/>
        <end position="900"/>
    </location>
</feature>
<feature type="repeat" description="B-10">
    <location>
        <begin position="901"/>
        <end position="924"/>
    </location>
</feature>
<feature type="repeat" description="A-24">
    <location>
        <begin position="925"/>
        <end position="948"/>
    </location>
</feature>
<feature type="repeat" description="A-25">
    <location>
        <begin position="949"/>
        <end position="971"/>
    </location>
</feature>
<feature type="repeat" description="A-26">
    <location>
        <begin position="972"/>
        <end position="995"/>
    </location>
</feature>
<feature type="repeat" description="A-27">
    <location>
        <begin position="996"/>
        <end position="1019"/>
    </location>
</feature>
<feature type="region of interest" description="41 X 24 AA tandem repeats, Cys-rich">
    <location>
        <begin position="38"/>
        <end position="1019"/>
    </location>
</feature>
<feature type="sequence conflict" description="In Ref. 1; AAA33216." evidence="1" ref="1">
    <location>
        <begin position="19"/>
        <end position="25"/>
    </location>
</feature>
<feature type="sequence conflict" description="In Ref. 1; AAA33216." evidence="1" ref="1">
    <original>C</original>
    <variation>Y</variation>
    <location>
        <position position="87"/>
    </location>
</feature>
<feature type="sequence conflict" description="In Ref. 1; AAA33216." evidence="1" ref="1">
    <original>DD</original>
    <variation>VV</variation>
    <location>
        <begin position="154"/>
        <end position="155"/>
    </location>
</feature>
<feature type="sequence conflict" description="In Ref. 1; AAA33216." evidence="1" ref="1">
    <original>TQSGG</original>
    <variation>IQLGV</variation>
    <location>
        <begin position="165"/>
        <end position="169"/>
    </location>
</feature>
<feature type="sequence conflict" description="In Ref. 1; AAA33216." evidence="1" ref="1">
    <original>A</original>
    <variation>P</variation>
    <location>
        <position position="206"/>
    </location>
</feature>
<feature type="sequence conflict" description="In Ref. 1; AAA33216." evidence="1" ref="1">
    <original>C</original>
    <variation>S</variation>
    <location>
        <position position="266"/>
    </location>
</feature>
<feature type="sequence conflict" description="In Ref. 1; AAA33216." evidence="1" ref="1">
    <original>A</original>
    <variation>P</variation>
    <location>
        <position position="344"/>
    </location>
</feature>
<feature type="sequence conflict" description="In Ref. 1; AAA33216." evidence="1" ref="1">
    <original>MS</original>
    <variation>IR</variation>
    <location>
        <begin position="415"/>
        <end position="416"/>
    </location>
</feature>
<keyword id="KW-0272">Extracellular matrix</keyword>
<keyword id="KW-1185">Reference proteome</keyword>
<keyword id="KW-0677">Repeat</keyword>
<keyword id="KW-0964">Secreted</keyword>
<keyword id="KW-0732">Signal</keyword>
<name>PSTA_DICDI</name>
<comment type="function">
    <text>Component of the stalk tube, the matrix that encases stalk cells.</text>
</comment>
<comment type="subcellular location">
    <subcellularLocation>
        <location>Secreted</location>
        <location>Extracellular space</location>
        <location>Extracellular matrix</location>
    </subcellularLocation>
</comment>
<comment type="induction">
    <text>By the putative stalk-specific morphogen DIF (differentiation inducing factor).</text>
</comment>
<evidence type="ECO:0000305" key="1"/>